<gene>
    <name evidence="1" type="primary">nikB</name>
    <name type="synonym">oppB2</name>
    <name type="ordered locus">SAR1395</name>
</gene>
<accession>Q6GH25</accession>
<evidence type="ECO:0000250" key="1">
    <source>
        <dbReference type="UniProtKB" id="Q2FYQ5"/>
    </source>
</evidence>
<evidence type="ECO:0000255" key="2">
    <source>
        <dbReference type="PROSITE-ProRule" id="PRU00441"/>
    </source>
</evidence>
<evidence type="ECO:0000305" key="3"/>
<keyword id="KW-1003">Cell membrane</keyword>
<keyword id="KW-0406">Ion transport</keyword>
<keyword id="KW-0472">Membrane</keyword>
<keyword id="KW-0533">Nickel</keyword>
<keyword id="KW-0921">Nickel transport</keyword>
<keyword id="KW-0812">Transmembrane</keyword>
<keyword id="KW-1133">Transmembrane helix</keyword>
<keyword id="KW-0813">Transport</keyword>
<name>NIKB_STAAR</name>
<reference key="1">
    <citation type="journal article" date="2004" name="Proc. Natl. Acad. Sci. U.S.A.">
        <title>Complete genomes of two clinical Staphylococcus aureus strains: evidence for the rapid evolution of virulence and drug resistance.</title>
        <authorList>
            <person name="Holden M.T.G."/>
            <person name="Feil E.J."/>
            <person name="Lindsay J.A."/>
            <person name="Peacock S.J."/>
            <person name="Day N.P.J."/>
            <person name="Enright M.C."/>
            <person name="Foster T.J."/>
            <person name="Moore C.E."/>
            <person name="Hurst L."/>
            <person name="Atkin R."/>
            <person name="Barron A."/>
            <person name="Bason N."/>
            <person name="Bentley S.D."/>
            <person name="Chillingworth C."/>
            <person name="Chillingworth T."/>
            <person name="Churcher C."/>
            <person name="Clark L."/>
            <person name="Corton C."/>
            <person name="Cronin A."/>
            <person name="Doggett J."/>
            <person name="Dowd L."/>
            <person name="Feltwell T."/>
            <person name="Hance Z."/>
            <person name="Harris B."/>
            <person name="Hauser H."/>
            <person name="Holroyd S."/>
            <person name="Jagels K."/>
            <person name="James K.D."/>
            <person name="Lennard N."/>
            <person name="Line A."/>
            <person name="Mayes R."/>
            <person name="Moule S."/>
            <person name="Mungall K."/>
            <person name="Ormond D."/>
            <person name="Quail M.A."/>
            <person name="Rabbinowitsch E."/>
            <person name="Rutherford K.M."/>
            <person name="Sanders M."/>
            <person name="Sharp S."/>
            <person name="Simmonds M."/>
            <person name="Stevens K."/>
            <person name="Whitehead S."/>
            <person name="Barrell B.G."/>
            <person name="Spratt B.G."/>
            <person name="Parkhill J."/>
        </authorList>
    </citation>
    <scope>NUCLEOTIDE SEQUENCE [LARGE SCALE GENOMIC DNA]</scope>
    <source>
        <strain>MRSA252</strain>
    </source>
</reference>
<protein>
    <recommendedName>
        <fullName evidence="1">Nickel import system permease protein NikB</fullName>
    </recommendedName>
</protein>
<comment type="function">
    <text evidence="1">Part of the ABC transporter complex NikABCDE (Opp2) involved in nickel import. Probably responsible for the translocation of the substrate across the membrane.</text>
</comment>
<comment type="subunit">
    <text evidence="1">The complex is composed of two ATP-binding proteins (NikD and NikE), two transmembrane proteins (NikB and NikC) and a solute-binding protein (NikA).</text>
</comment>
<comment type="subcellular location">
    <subcellularLocation>
        <location evidence="3">Cell membrane</location>
        <topology evidence="2">Multi-pass membrane protein</topology>
    </subcellularLocation>
</comment>
<comment type="similarity">
    <text evidence="3">Belongs to the binding-protein-dependent transport system permease family. OppBC subfamily.</text>
</comment>
<feature type="chain" id="PRO_0000276776" description="Nickel import system permease protein NikB">
    <location>
        <begin position="1"/>
        <end position="328"/>
    </location>
</feature>
<feature type="transmembrane region" description="Helical" evidence="2">
    <location>
        <begin position="11"/>
        <end position="31"/>
    </location>
</feature>
<feature type="transmembrane region" description="Helical" evidence="2">
    <location>
        <begin position="104"/>
        <end position="124"/>
    </location>
</feature>
<feature type="transmembrane region" description="Helical" evidence="2">
    <location>
        <begin position="139"/>
        <end position="159"/>
    </location>
</feature>
<feature type="transmembrane region" description="Helical" evidence="2">
    <location>
        <begin position="170"/>
        <end position="190"/>
    </location>
</feature>
<feature type="transmembrane region" description="Helical" evidence="2">
    <location>
        <begin position="229"/>
        <end position="249"/>
    </location>
</feature>
<feature type="transmembrane region" description="Helical" evidence="2">
    <location>
        <begin position="279"/>
        <end position="299"/>
    </location>
</feature>
<feature type="domain" description="ABC transmembrane type-1" evidence="2">
    <location>
        <begin position="100"/>
        <end position="297"/>
    </location>
</feature>
<dbReference type="EMBL" id="BX571856">
    <property type="protein sequence ID" value="CAG40392.1"/>
    <property type="molecule type" value="Genomic_DNA"/>
</dbReference>
<dbReference type="RefSeq" id="WP_000469932.1">
    <property type="nucleotide sequence ID" value="NC_002952.2"/>
</dbReference>
<dbReference type="SMR" id="Q6GH25"/>
<dbReference type="KEGG" id="sar:SAR1395"/>
<dbReference type="HOGENOM" id="CLU_036879_0_2_9"/>
<dbReference type="Proteomes" id="UP000000596">
    <property type="component" value="Chromosome"/>
</dbReference>
<dbReference type="GO" id="GO:0005886">
    <property type="term" value="C:plasma membrane"/>
    <property type="evidence" value="ECO:0007669"/>
    <property type="project" value="UniProtKB-SubCell"/>
</dbReference>
<dbReference type="GO" id="GO:0015099">
    <property type="term" value="F:nickel cation transmembrane transporter activity"/>
    <property type="evidence" value="ECO:0007669"/>
    <property type="project" value="InterPro"/>
</dbReference>
<dbReference type="CDD" id="cd06261">
    <property type="entry name" value="TM_PBP2"/>
    <property type="match status" value="1"/>
</dbReference>
<dbReference type="Gene3D" id="1.10.3720.10">
    <property type="entry name" value="MetI-like"/>
    <property type="match status" value="1"/>
</dbReference>
<dbReference type="InterPro" id="IPR045621">
    <property type="entry name" value="BPD_transp_1_N"/>
</dbReference>
<dbReference type="InterPro" id="IPR000515">
    <property type="entry name" value="MetI-like"/>
</dbReference>
<dbReference type="InterPro" id="IPR035906">
    <property type="entry name" value="MetI-like_sf"/>
</dbReference>
<dbReference type="InterPro" id="IPR050045">
    <property type="entry name" value="Opp2B"/>
</dbReference>
<dbReference type="NCBIfam" id="NF045470">
    <property type="entry name" value="Opp2B"/>
    <property type="match status" value="1"/>
</dbReference>
<dbReference type="PANTHER" id="PTHR43163">
    <property type="entry name" value="DIPEPTIDE TRANSPORT SYSTEM PERMEASE PROTEIN DPPB-RELATED"/>
    <property type="match status" value="1"/>
</dbReference>
<dbReference type="PANTHER" id="PTHR43163:SF6">
    <property type="entry name" value="DIPEPTIDE TRANSPORT SYSTEM PERMEASE PROTEIN DPPB-RELATED"/>
    <property type="match status" value="1"/>
</dbReference>
<dbReference type="Pfam" id="PF00528">
    <property type="entry name" value="BPD_transp_1"/>
    <property type="match status" value="1"/>
</dbReference>
<dbReference type="Pfam" id="PF19300">
    <property type="entry name" value="BPD_transp_1_N"/>
    <property type="match status" value="1"/>
</dbReference>
<dbReference type="SUPFAM" id="SSF161098">
    <property type="entry name" value="MetI-like"/>
    <property type="match status" value="1"/>
</dbReference>
<dbReference type="PROSITE" id="PS50928">
    <property type="entry name" value="ABC_TM1"/>
    <property type="match status" value="1"/>
</dbReference>
<sequence length="328" mass="36644">MFIIKSILYRLIQMIVVLFVISTLAFILMKLSPGNPVDKILHLDVAQVSTEQINATKDKLGLNDSLLVQWWHWMNHLLHFNLGKSFESKEPVTQILFNYAPITLLISFSTLVVSLCISIPLGIIAAKRFHKLSDKVIRVISTLSISLPAFFIGIILLFIVTNLMNIDSVILSQFILPVLTLSLGMCAYIIRLVRSNLLILLKSNIVQASRLRGMNERYILIHDLLKPTILPIIPLLGISLGSLIGGTVVIENLFDIPGIGYLLMDSIKSRDYPVIQGCVLFIGFFVVIINTIADLLTLLLDPKQRLQLGNPKNKTNTPLISESSDRHA</sequence>
<proteinExistence type="inferred from homology"/>
<organism>
    <name type="scientific">Staphylococcus aureus (strain MRSA252)</name>
    <dbReference type="NCBI Taxonomy" id="282458"/>
    <lineage>
        <taxon>Bacteria</taxon>
        <taxon>Bacillati</taxon>
        <taxon>Bacillota</taxon>
        <taxon>Bacilli</taxon>
        <taxon>Bacillales</taxon>
        <taxon>Staphylococcaceae</taxon>
        <taxon>Staphylococcus</taxon>
    </lineage>
</organism>